<comment type="function">
    <text evidence="1">Catalyzes the transfer of the enolpyruvyl moiety of phosphoenolpyruvate (PEP) to the 5-hydroxyl of shikimate-3-phosphate (S3P) to produce enolpyruvyl shikimate-3-phosphate and inorganic phosphate.</text>
</comment>
<comment type="catalytic activity">
    <reaction evidence="1">
        <text>3-phosphoshikimate + phosphoenolpyruvate = 5-O-(1-carboxyvinyl)-3-phosphoshikimate + phosphate</text>
        <dbReference type="Rhea" id="RHEA:21256"/>
        <dbReference type="ChEBI" id="CHEBI:43474"/>
        <dbReference type="ChEBI" id="CHEBI:57701"/>
        <dbReference type="ChEBI" id="CHEBI:58702"/>
        <dbReference type="ChEBI" id="CHEBI:145989"/>
        <dbReference type="EC" id="2.5.1.19"/>
    </reaction>
    <physiologicalReaction direction="left-to-right" evidence="1">
        <dbReference type="Rhea" id="RHEA:21257"/>
    </physiologicalReaction>
</comment>
<comment type="pathway">
    <text evidence="1">Metabolic intermediate biosynthesis; chorismate biosynthesis; chorismate from D-erythrose 4-phosphate and phosphoenolpyruvate: step 6/7.</text>
</comment>
<comment type="subunit">
    <text evidence="1">Monomer.</text>
</comment>
<comment type="subcellular location">
    <subcellularLocation>
        <location evidence="1">Cytoplasm</location>
    </subcellularLocation>
</comment>
<comment type="similarity">
    <text evidence="1">Belongs to the EPSP synthase family.</text>
</comment>
<keyword id="KW-0028">Amino-acid biosynthesis</keyword>
<keyword id="KW-0057">Aromatic amino acid biosynthesis</keyword>
<keyword id="KW-0963">Cytoplasm</keyword>
<keyword id="KW-1185">Reference proteome</keyword>
<keyword id="KW-0808">Transferase</keyword>
<gene>
    <name evidence="1" type="primary">aroA</name>
    <name type="ordered locus">LA_1258</name>
</gene>
<sequence length="440" mass="48266">MIPKKTKLKSREIEVPGDKSLSHRSVLFAALSKGKSKVTGFLEAEDPLNTMSAFAKLGLKVQKVKPGEYEFESPGKNKLVSPNVDLDFGNAGTGIRLSAGLICGLPGINATLTGDNSLKKRPMGRIIKPLSSMGASIVGLGEKETAPLKIEGKKLKGFRYESPIASAQVKSCLMLAAISSETDLEYSENILSRDHTENMFRFLGNKIEQISPLHFKIKPPYVLNGGEFRVPGDISSAAFFLVLGVLAKEGNLLIKNIGLNPARTGILTALQSMGAKIEIQNKRIECGETVGDLKTYPSNLKKSNIPESLIPSIIDEIPILSVAGFFAEGGFEIRHAEELRAKESDRIHTMVSNFRELGIEVEEYTDGYSFDGTSKKSSEVWTRLSTVKKIPIQSYMDHRIAMSFLIFKTLSGLDLQIDETSWIETSFPGFEKLLESCINE</sequence>
<feature type="chain" id="PRO_0000088267" description="3-phosphoshikimate 1-carboxyvinyltransferase">
    <location>
        <begin position="1"/>
        <end position="440"/>
    </location>
</feature>
<feature type="active site" description="Proton acceptor" evidence="1">
    <location>
        <position position="315"/>
    </location>
</feature>
<feature type="binding site" evidence="1">
    <location>
        <position position="19"/>
    </location>
    <ligand>
        <name>3-phosphoshikimate</name>
        <dbReference type="ChEBI" id="CHEBI:145989"/>
    </ligand>
</feature>
<feature type="binding site" evidence="1">
    <location>
        <position position="19"/>
    </location>
    <ligand>
        <name>phosphoenolpyruvate</name>
        <dbReference type="ChEBI" id="CHEBI:58702"/>
    </ligand>
</feature>
<feature type="binding site" evidence="1">
    <location>
        <position position="20"/>
    </location>
    <ligand>
        <name>3-phosphoshikimate</name>
        <dbReference type="ChEBI" id="CHEBI:145989"/>
    </ligand>
</feature>
<feature type="binding site" evidence="1">
    <location>
        <position position="24"/>
    </location>
    <ligand>
        <name>3-phosphoshikimate</name>
        <dbReference type="ChEBI" id="CHEBI:145989"/>
    </ligand>
</feature>
<feature type="binding site" evidence="1">
    <location>
        <position position="92"/>
    </location>
    <ligand>
        <name>phosphoenolpyruvate</name>
        <dbReference type="ChEBI" id="CHEBI:58702"/>
    </ligand>
</feature>
<feature type="binding site" evidence="1">
    <location>
        <position position="121"/>
    </location>
    <ligand>
        <name>phosphoenolpyruvate</name>
        <dbReference type="ChEBI" id="CHEBI:58702"/>
    </ligand>
</feature>
<feature type="binding site" evidence="1">
    <location>
        <position position="166"/>
    </location>
    <ligand>
        <name>3-phosphoshikimate</name>
        <dbReference type="ChEBI" id="CHEBI:145989"/>
    </ligand>
</feature>
<feature type="binding site" evidence="1">
    <location>
        <position position="168"/>
    </location>
    <ligand>
        <name>3-phosphoshikimate</name>
        <dbReference type="ChEBI" id="CHEBI:145989"/>
    </ligand>
</feature>
<feature type="binding site" evidence="1">
    <location>
        <position position="168"/>
    </location>
    <ligand>
        <name>phosphoenolpyruvate</name>
        <dbReference type="ChEBI" id="CHEBI:58702"/>
    </ligand>
</feature>
<feature type="binding site" evidence="1">
    <location>
        <position position="315"/>
    </location>
    <ligand>
        <name>3-phosphoshikimate</name>
        <dbReference type="ChEBI" id="CHEBI:145989"/>
    </ligand>
</feature>
<feature type="binding site" evidence="1">
    <location>
        <position position="342"/>
    </location>
    <ligand>
        <name>3-phosphoshikimate</name>
        <dbReference type="ChEBI" id="CHEBI:145989"/>
    </ligand>
</feature>
<feature type="binding site" evidence="1">
    <location>
        <position position="346"/>
    </location>
    <ligand>
        <name>phosphoenolpyruvate</name>
        <dbReference type="ChEBI" id="CHEBI:58702"/>
    </ligand>
</feature>
<feature type="binding site" evidence="1">
    <location>
        <position position="399"/>
    </location>
    <ligand>
        <name>phosphoenolpyruvate</name>
        <dbReference type="ChEBI" id="CHEBI:58702"/>
    </ligand>
</feature>
<reference key="1">
    <citation type="journal article" date="2003" name="Nature">
        <title>Unique physiological and pathogenic features of Leptospira interrogans revealed by whole-genome sequencing.</title>
        <authorList>
            <person name="Ren S.-X."/>
            <person name="Fu G."/>
            <person name="Jiang X.-G."/>
            <person name="Zeng R."/>
            <person name="Miao Y.-G."/>
            <person name="Xu H."/>
            <person name="Zhang Y.-X."/>
            <person name="Xiong H."/>
            <person name="Lu G."/>
            <person name="Lu L.-F."/>
            <person name="Jiang H.-Q."/>
            <person name="Jia J."/>
            <person name="Tu Y.-F."/>
            <person name="Jiang J.-X."/>
            <person name="Gu W.-Y."/>
            <person name="Zhang Y.-Q."/>
            <person name="Cai Z."/>
            <person name="Sheng H.-H."/>
            <person name="Yin H.-F."/>
            <person name="Zhang Y."/>
            <person name="Zhu G.-F."/>
            <person name="Wan M."/>
            <person name="Huang H.-L."/>
            <person name="Qian Z."/>
            <person name="Wang S.-Y."/>
            <person name="Ma W."/>
            <person name="Yao Z.-J."/>
            <person name="Shen Y."/>
            <person name="Qiang B.-Q."/>
            <person name="Xia Q.-C."/>
            <person name="Guo X.-K."/>
            <person name="Danchin A."/>
            <person name="Saint Girons I."/>
            <person name="Somerville R.L."/>
            <person name="Wen Y.-M."/>
            <person name="Shi M.-H."/>
            <person name="Chen Z."/>
            <person name="Xu J.-G."/>
            <person name="Zhao G.-P."/>
        </authorList>
    </citation>
    <scope>NUCLEOTIDE SEQUENCE [LARGE SCALE GENOMIC DNA]</scope>
    <source>
        <strain>56601</strain>
    </source>
</reference>
<proteinExistence type="inferred from homology"/>
<accession>Q8F6P5</accession>
<protein>
    <recommendedName>
        <fullName evidence="1">3-phosphoshikimate 1-carboxyvinyltransferase</fullName>
        <ecNumber evidence="1">2.5.1.19</ecNumber>
    </recommendedName>
    <alternativeName>
        <fullName evidence="1">5-enolpyruvylshikimate-3-phosphate synthase</fullName>
        <shortName evidence="1">EPSP synthase</shortName>
        <shortName evidence="1">EPSPS</shortName>
    </alternativeName>
</protein>
<name>AROA_LEPIN</name>
<dbReference type="EC" id="2.5.1.19" evidence="1"/>
<dbReference type="EMBL" id="AE010300">
    <property type="protein sequence ID" value="AAN48457.1"/>
    <property type="molecule type" value="Genomic_DNA"/>
</dbReference>
<dbReference type="RefSeq" id="NP_711439.1">
    <property type="nucleotide sequence ID" value="NC_004342.2"/>
</dbReference>
<dbReference type="RefSeq" id="WP_000612433.1">
    <property type="nucleotide sequence ID" value="NC_004342.2"/>
</dbReference>
<dbReference type="SMR" id="Q8F6P5"/>
<dbReference type="FunCoup" id="Q8F6P5">
    <property type="interactions" value="434"/>
</dbReference>
<dbReference type="STRING" id="189518.LA_1258"/>
<dbReference type="PaxDb" id="189518-LA_1258"/>
<dbReference type="EnsemblBacteria" id="AAN48457">
    <property type="protein sequence ID" value="AAN48457"/>
    <property type="gene ID" value="LA_1258"/>
</dbReference>
<dbReference type="KEGG" id="lil:LA_1258"/>
<dbReference type="PATRIC" id="fig|189518.3.peg.1259"/>
<dbReference type="HOGENOM" id="CLU_024321_0_1_12"/>
<dbReference type="InParanoid" id="Q8F6P5"/>
<dbReference type="OrthoDB" id="9809920at2"/>
<dbReference type="UniPathway" id="UPA00053">
    <property type="reaction ID" value="UER00089"/>
</dbReference>
<dbReference type="Proteomes" id="UP000001408">
    <property type="component" value="Chromosome I"/>
</dbReference>
<dbReference type="GO" id="GO:0005737">
    <property type="term" value="C:cytoplasm"/>
    <property type="evidence" value="ECO:0007669"/>
    <property type="project" value="UniProtKB-SubCell"/>
</dbReference>
<dbReference type="GO" id="GO:0003866">
    <property type="term" value="F:3-phosphoshikimate 1-carboxyvinyltransferase activity"/>
    <property type="evidence" value="ECO:0000318"/>
    <property type="project" value="GO_Central"/>
</dbReference>
<dbReference type="GO" id="GO:0008652">
    <property type="term" value="P:amino acid biosynthetic process"/>
    <property type="evidence" value="ECO:0007669"/>
    <property type="project" value="UniProtKB-KW"/>
</dbReference>
<dbReference type="GO" id="GO:0009073">
    <property type="term" value="P:aromatic amino acid family biosynthetic process"/>
    <property type="evidence" value="ECO:0007669"/>
    <property type="project" value="UniProtKB-KW"/>
</dbReference>
<dbReference type="GO" id="GO:0009423">
    <property type="term" value="P:chorismate biosynthetic process"/>
    <property type="evidence" value="ECO:0000318"/>
    <property type="project" value="GO_Central"/>
</dbReference>
<dbReference type="CDD" id="cd01556">
    <property type="entry name" value="EPSP_synthase"/>
    <property type="match status" value="1"/>
</dbReference>
<dbReference type="FunFam" id="3.65.10.10:FF:000005">
    <property type="entry name" value="3-phosphoshikimate 1-carboxyvinyltransferase"/>
    <property type="match status" value="1"/>
</dbReference>
<dbReference type="Gene3D" id="3.65.10.10">
    <property type="entry name" value="Enolpyruvate transferase domain"/>
    <property type="match status" value="2"/>
</dbReference>
<dbReference type="HAMAP" id="MF_00210">
    <property type="entry name" value="EPSP_synth"/>
    <property type="match status" value="1"/>
</dbReference>
<dbReference type="InterPro" id="IPR001986">
    <property type="entry name" value="Enolpyruvate_Tfrase_dom"/>
</dbReference>
<dbReference type="InterPro" id="IPR036968">
    <property type="entry name" value="Enolpyruvate_Tfrase_sf"/>
</dbReference>
<dbReference type="InterPro" id="IPR006264">
    <property type="entry name" value="EPSP_synthase"/>
</dbReference>
<dbReference type="InterPro" id="IPR023193">
    <property type="entry name" value="EPSP_synthase_CS"/>
</dbReference>
<dbReference type="InterPro" id="IPR013792">
    <property type="entry name" value="RNA3'P_cycl/enolpyr_Trfase_a/b"/>
</dbReference>
<dbReference type="NCBIfam" id="TIGR01356">
    <property type="entry name" value="aroA"/>
    <property type="match status" value="1"/>
</dbReference>
<dbReference type="PANTHER" id="PTHR21090">
    <property type="entry name" value="AROM/DEHYDROQUINATE SYNTHASE"/>
    <property type="match status" value="1"/>
</dbReference>
<dbReference type="PANTHER" id="PTHR21090:SF5">
    <property type="entry name" value="PENTAFUNCTIONAL AROM POLYPEPTIDE"/>
    <property type="match status" value="1"/>
</dbReference>
<dbReference type="Pfam" id="PF00275">
    <property type="entry name" value="EPSP_synthase"/>
    <property type="match status" value="1"/>
</dbReference>
<dbReference type="PIRSF" id="PIRSF000505">
    <property type="entry name" value="EPSPS"/>
    <property type="match status" value="1"/>
</dbReference>
<dbReference type="SUPFAM" id="SSF55205">
    <property type="entry name" value="EPT/RTPC-like"/>
    <property type="match status" value="1"/>
</dbReference>
<dbReference type="PROSITE" id="PS00885">
    <property type="entry name" value="EPSP_SYNTHASE_2"/>
    <property type="match status" value="1"/>
</dbReference>
<organism>
    <name type="scientific">Leptospira interrogans serogroup Icterohaemorrhagiae serovar Lai (strain 56601)</name>
    <dbReference type="NCBI Taxonomy" id="189518"/>
    <lineage>
        <taxon>Bacteria</taxon>
        <taxon>Pseudomonadati</taxon>
        <taxon>Spirochaetota</taxon>
        <taxon>Spirochaetia</taxon>
        <taxon>Leptospirales</taxon>
        <taxon>Leptospiraceae</taxon>
        <taxon>Leptospira</taxon>
    </lineage>
</organism>
<evidence type="ECO:0000255" key="1">
    <source>
        <dbReference type="HAMAP-Rule" id="MF_00210"/>
    </source>
</evidence>